<feature type="chain" id="PRO_0000072710" description="Putative Ig-like domain-containing protein C1">
    <location>
        <begin position="1"/>
        <end position="340"/>
    </location>
</feature>
<feature type="domain" description="Ig-like">
    <location>
        <begin position="207"/>
        <end position="294"/>
    </location>
</feature>
<keyword id="KW-0393">Immunoglobulin domain</keyword>
<dbReference type="EMBL" id="L22013">
    <property type="protein sequence ID" value="AAC37870.1"/>
    <property type="molecule type" value="Unassigned_RNA"/>
</dbReference>
<dbReference type="EMBL" id="L21931">
    <property type="protein sequence ID" value="AAC37871.1"/>
    <property type="molecule type" value="Unassigned_DNA"/>
</dbReference>
<dbReference type="SMR" id="P32231"/>
<dbReference type="KEGG" id="vg:932350"/>
<dbReference type="KEGG" id="vg:932361"/>
<dbReference type="Gene3D" id="2.60.40.10">
    <property type="entry name" value="Immunoglobulins"/>
    <property type="match status" value="1"/>
</dbReference>
<dbReference type="Gene3D" id="3.30.500.10">
    <property type="entry name" value="MHC class I-like antigen recognition-like"/>
    <property type="match status" value="1"/>
</dbReference>
<dbReference type="InterPro" id="IPR049130">
    <property type="entry name" value="2L_N_poxvirus"/>
</dbReference>
<dbReference type="InterPro" id="IPR007110">
    <property type="entry name" value="Ig-like_dom"/>
</dbReference>
<dbReference type="InterPro" id="IPR036179">
    <property type="entry name" value="Ig-like_dom_sf"/>
</dbReference>
<dbReference type="InterPro" id="IPR013783">
    <property type="entry name" value="Ig-like_fold"/>
</dbReference>
<dbReference type="InterPro" id="IPR037055">
    <property type="entry name" value="MHC_I-like_Ag-recog_sf"/>
</dbReference>
<dbReference type="Pfam" id="PF21584">
    <property type="entry name" value="2L_N_poxvirus"/>
    <property type="match status" value="1"/>
</dbReference>
<dbReference type="SUPFAM" id="SSF48726">
    <property type="entry name" value="Immunoglobulin"/>
    <property type="match status" value="1"/>
</dbReference>
<dbReference type="PROSITE" id="PS50835">
    <property type="entry name" value="IG_LIKE"/>
    <property type="match status" value="1"/>
</dbReference>
<protein>
    <recommendedName>
        <fullName>Putative Ig-like domain-containing protein C1</fullName>
    </recommendedName>
</protein>
<proteinExistence type="predicted"/>
<sequence length="340" mass="39617">MITKAIVILSIITAYVDASAFLVYNYTYTLQDDNHRYDFEVTDYFNDILIKRLKLNSETGRPELRNEPPTWFNETKIRYYPKNNYNFMFWLNRMSETLDEINKLPETSNPYKTMSLTIGCTDLRQLQVNFGYVTVGGNIWTRFDPKNKRFSKVRSRTFPKVGMLTVKSQHWERVMEHLGSMVTLTCPFTADDYYKISKGYIDKPVKPTVTVTGIERGDNTTLICTFDNHYPSSVAVKWYNIEDFAPDYRYDPYVNELLPDTDYLPGEPGYPTITRRLGDKYLFTSSPRVMVPTIMSNRIACVGFHSTLEPSIYRCVNCSGPEPVLQYQGDRRNDLEDEED</sequence>
<name>VC01_SWPVK</name>
<reference key="1">
    <citation type="journal article" date="1993" name="Virology">
        <title>DNA sequence analysis of conserved and unique regions of swinepox virus: identification of genetic elements supporting phenotypic observations including a novel G protein-coupled receptor homologue.</title>
        <authorList>
            <person name="Massung R.F."/>
            <person name="Jayarama V."/>
            <person name="Moyer R.W."/>
        </authorList>
    </citation>
    <scope>NUCLEOTIDE SEQUENCE</scope>
</reference>
<organismHost>
    <name type="scientific">Sus scrofa</name>
    <name type="common">Pig</name>
    <dbReference type="NCBI Taxonomy" id="9823"/>
</organismHost>
<accession>P32231</accession>
<organism>
    <name type="scientific">Swinepox virus (strain Kasza)</name>
    <name type="common">SWPV</name>
    <dbReference type="NCBI Taxonomy" id="10277"/>
    <lineage>
        <taxon>Viruses</taxon>
        <taxon>Varidnaviria</taxon>
        <taxon>Bamfordvirae</taxon>
        <taxon>Nucleocytoviricota</taxon>
        <taxon>Pokkesviricetes</taxon>
        <taxon>Chitovirales</taxon>
        <taxon>Poxviridae</taxon>
        <taxon>Chordopoxvirinae</taxon>
        <taxon>Suipoxvirus</taxon>
        <taxon>Swinepox virus</taxon>
    </lineage>
</organism>
<gene>
    <name type="ORF">C1L</name>
    <name type="ORF">K4R</name>
</gene>